<comment type="function">
    <text evidence="1">Specifically dimethylates two adjacent adenosines (A1518 and A1519) in the loop of a conserved hairpin near the 3'-end of 16S rRNA in the 30S particle. May play a critical role in biogenesis of 30S subunits.</text>
</comment>
<comment type="catalytic activity">
    <reaction evidence="1">
        <text>adenosine(1518)/adenosine(1519) in 16S rRNA + 4 S-adenosyl-L-methionine = N(6)-dimethyladenosine(1518)/N(6)-dimethyladenosine(1519) in 16S rRNA + 4 S-adenosyl-L-homocysteine + 4 H(+)</text>
        <dbReference type="Rhea" id="RHEA:19609"/>
        <dbReference type="Rhea" id="RHEA-COMP:10232"/>
        <dbReference type="Rhea" id="RHEA-COMP:10233"/>
        <dbReference type="ChEBI" id="CHEBI:15378"/>
        <dbReference type="ChEBI" id="CHEBI:57856"/>
        <dbReference type="ChEBI" id="CHEBI:59789"/>
        <dbReference type="ChEBI" id="CHEBI:74411"/>
        <dbReference type="ChEBI" id="CHEBI:74493"/>
        <dbReference type="EC" id="2.1.1.182"/>
    </reaction>
</comment>
<comment type="subcellular location">
    <subcellularLocation>
        <location evidence="1">Cytoplasm</location>
    </subcellularLocation>
</comment>
<comment type="similarity">
    <text evidence="1">Belongs to the class I-like SAM-binding methyltransferase superfamily. rRNA adenine N(6)-methyltransferase family. RsmA subfamily.</text>
</comment>
<reference key="1">
    <citation type="journal article" date="2009" name="Vaccine">
        <title>Whole genome sequence analysis of Mycobacterium bovis bacillus Calmette-Guerin (BCG) Tokyo 172: a comparative study of BCG vaccine substrains.</title>
        <authorList>
            <person name="Seki M."/>
            <person name="Honda I."/>
            <person name="Fujita I."/>
            <person name="Yano I."/>
            <person name="Yamamoto S."/>
            <person name="Koyama A."/>
        </authorList>
    </citation>
    <scope>NUCLEOTIDE SEQUENCE [LARGE SCALE GENOMIC DNA]</scope>
    <source>
        <strain>BCG / Tokyo 172 / ATCC 35737 / TMC 1019</strain>
    </source>
</reference>
<name>RSMA_MYCBT</name>
<keyword id="KW-0963">Cytoplasm</keyword>
<keyword id="KW-0489">Methyltransferase</keyword>
<keyword id="KW-0694">RNA-binding</keyword>
<keyword id="KW-0698">rRNA processing</keyword>
<keyword id="KW-0949">S-adenosyl-L-methionine</keyword>
<keyword id="KW-0808">Transferase</keyword>
<sequence>MCCTSGCALTIRLLGRTEIRRLAKELDFRPRKSLGQNFVHDANTVRRVVAASGVSRSDLVLEVGPGLGSLTLALLDRGATVTAVEIDPLLASRLQQTVAEHSHSEVHRLTVVNRDVLALRREDLAAAPTAVVANLPYNVAVPALLHLLVEFPSIRVVTVMVQAEVAERLAAEPGSKEYGVPSVKLRFFGRVRRCGMVSPTVFWPIPRVYSGLVRIDRYETSPWPTDDAFRRRVFELVDIAFAQRRKTSRNAFVQWAGSGSESANRLLAASIDPARRGETLSIDDFVRLLRRSGGSDEATSTGRDARAPDISGHASAS</sequence>
<evidence type="ECO:0000255" key="1">
    <source>
        <dbReference type="HAMAP-Rule" id="MF_00607"/>
    </source>
</evidence>
<evidence type="ECO:0000256" key="2">
    <source>
        <dbReference type="SAM" id="MobiDB-lite"/>
    </source>
</evidence>
<feature type="chain" id="PRO_1000194389" description="Ribosomal RNA small subunit methyltransferase A">
    <location>
        <begin position="1"/>
        <end position="317"/>
    </location>
</feature>
<feature type="region of interest" description="Disordered" evidence="2">
    <location>
        <begin position="293"/>
        <end position="317"/>
    </location>
</feature>
<feature type="binding site" evidence="1">
    <location>
        <position position="37"/>
    </location>
    <ligand>
        <name>S-adenosyl-L-methionine</name>
        <dbReference type="ChEBI" id="CHEBI:59789"/>
    </ligand>
</feature>
<feature type="binding site" evidence="1">
    <location>
        <position position="39"/>
    </location>
    <ligand>
        <name>S-adenosyl-L-methionine</name>
        <dbReference type="ChEBI" id="CHEBI:59789"/>
    </ligand>
</feature>
<feature type="binding site" evidence="1">
    <location>
        <position position="64"/>
    </location>
    <ligand>
        <name>S-adenosyl-L-methionine</name>
        <dbReference type="ChEBI" id="CHEBI:59789"/>
    </ligand>
</feature>
<feature type="binding site" evidence="1">
    <location>
        <position position="85"/>
    </location>
    <ligand>
        <name>S-adenosyl-L-methionine</name>
        <dbReference type="ChEBI" id="CHEBI:59789"/>
    </ligand>
</feature>
<feature type="binding site" evidence="1">
    <location>
        <position position="115"/>
    </location>
    <ligand>
        <name>S-adenosyl-L-methionine</name>
        <dbReference type="ChEBI" id="CHEBI:59789"/>
    </ligand>
</feature>
<feature type="binding site" evidence="1">
    <location>
        <position position="134"/>
    </location>
    <ligand>
        <name>S-adenosyl-L-methionine</name>
        <dbReference type="ChEBI" id="CHEBI:59789"/>
    </ligand>
</feature>
<gene>
    <name evidence="1" type="primary">rsmA</name>
    <name evidence="1" type="synonym">ksgA</name>
    <name type="ordered locus">JTY_1039</name>
</gene>
<proteinExistence type="inferred from homology"/>
<accession>C1AM01</accession>
<organism>
    <name type="scientific">Mycobacterium bovis (strain BCG / Tokyo 172 / ATCC 35737 / TMC 1019)</name>
    <dbReference type="NCBI Taxonomy" id="561275"/>
    <lineage>
        <taxon>Bacteria</taxon>
        <taxon>Bacillati</taxon>
        <taxon>Actinomycetota</taxon>
        <taxon>Actinomycetes</taxon>
        <taxon>Mycobacteriales</taxon>
        <taxon>Mycobacteriaceae</taxon>
        <taxon>Mycobacterium</taxon>
        <taxon>Mycobacterium tuberculosis complex</taxon>
    </lineage>
</organism>
<protein>
    <recommendedName>
        <fullName evidence="1">Ribosomal RNA small subunit methyltransferase A</fullName>
        <ecNumber evidence="1">2.1.1.182</ecNumber>
    </recommendedName>
    <alternativeName>
        <fullName evidence="1">16S rRNA (adenine(1518)-N(6)/adenine(1519)-N(6))-dimethyltransferase</fullName>
    </alternativeName>
    <alternativeName>
        <fullName evidence="1">16S rRNA dimethyladenosine transferase</fullName>
    </alternativeName>
    <alternativeName>
        <fullName evidence="1">16S rRNA dimethylase</fullName>
    </alternativeName>
    <alternativeName>
        <fullName evidence="1">S-adenosylmethionine-6-N', N'-adenosyl(rRNA) dimethyltransferase</fullName>
    </alternativeName>
</protein>
<dbReference type="EC" id="2.1.1.182" evidence="1"/>
<dbReference type="EMBL" id="AP010918">
    <property type="protein sequence ID" value="BAH25330.1"/>
    <property type="molecule type" value="Genomic_DNA"/>
</dbReference>
<dbReference type="RefSeq" id="WP_003405191.1">
    <property type="nucleotide sequence ID" value="NZ_CP014566.1"/>
</dbReference>
<dbReference type="SMR" id="C1AM01"/>
<dbReference type="GeneID" id="45424982"/>
<dbReference type="KEGG" id="mbt:JTY_1039"/>
<dbReference type="HOGENOM" id="CLU_041220_1_1_11"/>
<dbReference type="GO" id="GO:0005829">
    <property type="term" value="C:cytosol"/>
    <property type="evidence" value="ECO:0007669"/>
    <property type="project" value="TreeGrafter"/>
</dbReference>
<dbReference type="GO" id="GO:0052908">
    <property type="term" value="F:16S rRNA (adenine(1518)-N(6)/adenine(1519)-N(6))-dimethyltransferase activity"/>
    <property type="evidence" value="ECO:0007669"/>
    <property type="project" value="UniProtKB-EC"/>
</dbReference>
<dbReference type="GO" id="GO:0003723">
    <property type="term" value="F:RNA binding"/>
    <property type="evidence" value="ECO:0007669"/>
    <property type="project" value="UniProtKB-KW"/>
</dbReference>
<dbReference type="CDD" id="cd02440">
    <property type="entry name" value="AdoMet_MTases"/>
    <property type="match status" value="1"/>
</dbReference>
<dbReference type="FunFam" id="1.10.8.100:FF:000003">
    <property type="entry name" value="Ribosomal RNA small subunit methyltransferase A"/>
    <property type="match status" value="1"/>
</dbReference>
<dbReference type="FunFam" id="3.40.50.150:FF:000023">
    <property type="entry name" value="Ribosomal RNA small subunit methyltransferase A"/>
    <property type="match status" value="1"/>
</dbReference>
<dbReference type="Gene3D" id="1.10.8.100">
    <property type="entry name" value="Ribosomal RNA adenine dimethylase-like, domain 2"/>
    <property type="match status" value="1"/>
</dbReference>
<dbReference type="Gene3D" id="3.40.50.150">
    <property type="entry name" value="Vaccinia Virus protein VP39"/>
    <property type="match status" value="1"/>
</dbReference>
<dbReference type="HAMAP" id="MF_00607">
    <property type="entry name" value="16SrRNA_methyltr_A"/>
    <property type="match status" value="1"/>
</dbReference>
<dbReference type="InterPro" id="IPR001737">
    <property type="entry name" value="KsgA/Erm"/>
</dbReference>
<dbReference type="InterPro" id="IPR023165">
    <property type="entry name" value="rRNA_Ade_diMease-like_C"/>
</dbReference>
<dbReference type="InterPro" id="IPR020596">
    <property type="entry name" value="rRNA_Ade_Mease_Trfase_CS"/>
</dbReference>
<dbReference type="InterPro" id="IPR020598">
    <property type="entry name" value="rRNA_Ade_methylase_Trfase_N"/>
</dbReference>
<dbReference type="InterPro" id="IPR011530">
    <property type="entry name" value="rRNA_adenine_dimethylase"/>
</dbReference>
<dbReference type="InterPro" id="IPR029063">
    <property type="entry name" value="SAM-dependent_MTases_sf"/>
</dbReference>
<dbReference type="NCBIfam" id="TIGR00755">
    <property type="entry name" value="ksgA"/>
    <property type="match status" value="1"/>
</dbReference>
<dbReference type="PANTHER" id="PTHR11727">
    <property type="entry name" value="DIMETHYLADENOSINE TRANSFERASE"/>
    <property type="match status" value="1"/>
</dbReference>
<dbReference type="PANTHER" id="PTHR11727:SF7">
    <property type="entry name" value="DIMETHYLADENOSINE TRANSFERASE-RELATED"/>
    <property type="match status" value="1"/>
</dbReference>
<dbReference type="Pfam" id="PF00398">
    <property type="entry name" value="RrnaAD"/>
    <property type="match status" value="1"/>
</dbReference>
<dbReference type="SMART" id="SM00650">
    <property type="entry name" value="rADc"/>
    <property type="match status" value="1"/>
</dbReference>
<dbReference type="SUPFAM" id="SSF53335">
    <property type="entry name" value="S-adenosyl-L-methionine-dependent methyltransferases"/>
    <property type="match status" value="1"/>
</dbReference>
<dbReference type="PROSITE" id="PS01131">
    <property type="entry name" value="RRNA_A_DIMETH"/>
    <property type="match status" value="1"/>
</dbReference>
<dbReference type="PROSITE" id="PS51689">
    <property type="entry name" value="SAM_RNA_A_N6_MT"/>
    <property type="match status" value="1"/>
</dbReference>